<reference key="1">
    <citation type="journal article" date="2006" name="PLoS Genet.">
        <title>The complete genome sequence and comparative genome analysis of the high pathogenicity Yersinia enterocolitica strain 8081.</title>
        <authorList>
            <person name="Thomson N.R."/>
            <person name="Howard S."/>
            <person name="Wren B.W."/>
            <person name="Holden M.T.G."/>
            <person name="Crossman L."/>
            <person name="Challis G.L."/>
            <person name="Churcher C."/>
            <person name="Mungall K."/>
            <person name="Brooks K."/>
            <person name="Chillingworth T."/>
            <person name="Feltwell T."/>
            <person name="Abdellah Z."/>
            <person name="Hauser H."/>
            <person name="Jagels K."/>
            <person name="Maddison M."/>
            <person name="Moule S."/>
            <person name="Sanders M."/>
            <person name="Whitehead S."/>
            <person name="Quail M.A."/>
            <person name="Dougan G."/>
            <person name="Parkhill J."/>
            <person name="Prentice M.B."/>
        </authorList>
    </citation>
    <scope>NUCLEOTIDE SEQUENCE [LARGE SCALE GENOMIC DNA]</scope>
    <source>
        <strain>NCTC 13174 / 8081</strain>
    </source>
</reference>
<proteinExistence type="inferred from homology"/>
<accession>A1JKI8</accession>
<sequence>MPASLTWHDVIGQEKEQPYFKETLAYVAAERNAGKTIYPAQHDVFNAFRLTELDQVKVVILGQDPYHGPNQAHGLSFSVLPGVPAPPSLVNIYKELATDIPGFQRPNHGFLQSWAEQGVLLLNTVLTVEAGNAHSHANLGWETFTDKVIAALNEHRDGVIFMLWGAHAQKKGRIIDTQRHFILKAPHPSPLSAHRGFLGCKHFSQANQLLQQHGQQPIDWQPKLPTAE</sequence>
<dbReference type="EC" id="3.2.2.27" evidence="1"/>
<dbReference type="EMBL" id="AM286415">
    <property type="protein sequence ID" value="CAL11100.1"/>
    <property type="molecule type" value="Genomic_DNA"/>
</dbReference>
<dbReference type="RefSeq" id="WP_011815748.1">
    <property type="nucleotide sequence ID" value="NC_008800.1"/>
</dbReference>
<dbReference type="RefSeq" id="YP_001005335.1">
    <property type="nucleotide sequence ID" value="NC_008800.1"/>
</dbReference>
<dbReference type="SMR" id="A1JKI8"/>
<dbReference type="KEGG" id="yen:YE1002"/>
<dbReference type="PATRIC" id="fig|393305.7.peg.1099"/>
<dbReference type="eggNOG" id="COG0692">
    <property type="taxonomic scope" value="Bacteria"/>
</dbReference>
<dbReference type="HOGENOM" id="CLU_032162_3_0_6"/>
<dbReference type="OrthoDB" id="9804372at2"/>
<dbReference type="Proteomes" id="UP000000642">
    <property type="component" value="Chromosome"/>
</dbReference>
<dbReference type="GO" id="GO:0005737">
    <property type="term" value="C:cytoplasm"/>
    <property type="evidence" value="ECO:0007669"/>
    <property type="project" value="UniProtKB-SubCell"/>
</dbReference>
<dbReference type="GO" id="GO:0004844">
    <property type="term" value="F:uracil DNA N-glycosylase activity"/>
    <property type="evidence" value="ECO:0007669"/>
    <property type="project" value="UniProtKB-UniRule"/>
</dbReference>
<dbReference type="GO" id="GO:0097510">
    <property type="term" value="P:base-excision repair, AP site formation via deaminated base removal"/>
    <property type="evidence" value="ECO:0007669"/>
    <property type="project" value="TreeGrafter"/>
</dbReference>
<dbReference type="CDD" id="cd10027">
    <property type="entry name" value="UDG-F1-like"/>
    <property type="match status" value="1"/>
</dbReference>
<dbReference type="FunFam" id="3.40.470.10:FF:000001">
    <property type="entry name" value="Uracil-DNA glycosylase"/>
    <property type="match status" value="1"/>
</dbReference>
<dbReference type="Gene3D" id="3.40.470.10">
    <property type="entry name" value="Uracil-DNA glycosylase-like domain"/>
    <property type="match status" value="1"/>
</dbReference>
<dbReference type="HAMAP" id="MF_00148">
    <property type="entry name" value="UDG"/>
    <property type="match status" value="1"/>
</dbReference>
<dbReference type="InterPro" id="IPR002043">
    <property type="entry name" value="UDG_fam1"/>
</dbReference>
<dbReference type="InterPro" id="IPR018085">
    <property type="entry name" value="Ura-DNA_Glyclase_AS"/>
</dbReference>
<dbReference type="InterPro" id="IPR005122">
    <property type="entry name" value="Uracil-DNA_glycosylase-like"/>
</dbReference>
<dbReference type="InterPro" id="IPR036895">
    <property type="entry name" value="Uracil-DNA_glycosylase-like_sf"/>
</dbReference>
<dbReference type="NCBIfam" id="NF003588">
    <property type="entry name" value="PRK05254.1-1"/>
    <property type="match status" value="1"/>
</dbReference>
<dbReference type="NCBIfam" id="NF003589">
    <property type="entry name" value="PRK05254.1-2"/>
    <property type="match status" value="1"/>
</dbReference>
<dbReference type="NCBIfam" id="NF003591">
    <property type="entry name" value="PRK05254.1-4"/>
    <property type="match status" value="1"/>
</dbReference>
<dbReference type="NCBIfam" id="NF003592">
    <property type="entry name" value="PRK05254.1-5"/>
    <property type="match status" value="1"/>
</dbReference>
<dbReference type="NCBIfam" id="TIGR00628">
    <property type="entry name" value="ung"/>
    <property type="match status" value="1"/>
</dbReference>
<dbReference type="PANTHER" id="PTHR11264">
    <property type="entry name" value="URACIL-DNA GLYCOSYLASE"/>
    <property type="match status" value="1"/>
</dbReference>
<dbReference type="PANTHER" id="PTHR11264:SF0">
    <property type="entry name" value="URACIL-DNA GLYCOSYLASE"/>
    <property type="match status" value="1"/>
</dbReference>
<dbReference type="Pfam" id="PF03167">
    <property type="entry name" value="UDG"/>
    <property type="match status" value="1"/>
</dbReference>
<dbReference type="SMART" id="SM00986">
    <property type="entry name" value="UDG"/>
    <property type="match status" value="1"/>
</dbReference>
<dbReference type="SMART" id="SM00987">
    <property type="entry name" value="UreE_C"/>
    <property type="match status" value="1"/>
</dbReference>
<dbReference type="SUPFAM" id="SSF52141">
    <property type="entry name" value="Uracil-DNA glycosylase-like"/>
    <property type="match status" value="1"/>
</dbReference>
<dbReference type="PROSITE" id="PS00130">
    <property type="entry name" value="U_DNA_GLYCOSYLASE"/>
    <property type="match status" value="1"/>
</dbReference>
<protein>
    <recommendedName>
        <fullName evidence="1">Uracil-DNA glycosylase</fullName>
        <shortName evidence="1">UDG</shortName>
        <ecNumber evidence="1">3.2.2.27</ecNumber>
    </recommendedName>
</protein>
<keyword id="KW-0963">Cytoplasm</keyword>
<keyword id="KW-0227">DNA damage</keyword>
<keyword id="KW-0234">DNA repair</keyword>
<keyword id="KW-0378">Hydrolase</keyword>
<organism>
    <name type="scientific">Yersinia enterocolitica serotype O:8 / biotype 1B (strain NCTC 13174 / 8081)</name>
    <dbReference type="NCBI Taxonomy" id="393305"/>
    <lineage>
        <taxon>Bacteria</taxon>
        <taxon>Pseudomonadati</taxon>
        <taxon>Pseudomonadota</taxon>
        <taxon>Gammaproteobacteria</taxon>
        <taxon>Enterobacterales</taxon>
        <taxon>Yersiniaceae</taxon>
        <taxon>Yersinia</taxon>
    </lineage>
</organism>
<gene>
    <name evidence="1" type="primary">ung</name>
    <name type="ordered locus">YE1002</name>
</gene>
<comment type="function">
    <text evidence="1">Excises uracil residues from the DNA which can arise as a result of misincorporation of dUMP residues by DNA polymerase or due to deamination of cytosine.</text>
</comment>
<comment type="catalytic activity">
    <reaction evidence="1">
        <text>Hydrolyzes single-stranded DNA or mismatched double-stranded DNA and polynucleotides, releasing free uracil.</text>
        <dbReference type="EC" id="3.2.2.27"/>
    </reaction>
</comment>
<comment type="subcellular location">
    <subcellularLocation>
        <location evidence="1">Cytoplasm</location>
    </subcellularLocation>
</comment>
<comment type="similarity">
    <text evidence="1">Belongs to the uracil-DNA glycosylase (UDG) superfamily. UNG family.</text>
</comment>
<feature type="chain" id="PRO_1000009966" description="Uracil-DNA glycosylase">
    <location>
        <begin position="1"/>
        <end position="228"/>
    </location>
</feature>
<feature type="active site" description="Proton acceptor" evidence="1">
    <location>
        <position position="64"/>
    </location>
</feature>
<evidence type="ECO:0000255" key="1">
    <source>
        <dbReference type="HAMAP-Rule" id="MF_00148"/>
    </source>
</evidence>
<name>UNG_YERE8</name>